<name>PANB1_ORYSJ</name>
<protein>
    <recommendedName>
        <fullName>3-methyl-2-oxobutanoate hydroxymethyltransferase 1, mitochondrial</fullName>
        <ecNumber>2.1.2.11</ecNumber>
    </recommendedName>
    <alternativeName>
        <fullName>Ketopantoate hydroxymethyltransferase 1</fullName>
    </alternativeName>
</protein>
<comment type="function">
    <text evidence="1">Catalyzes the reversible reaction in which hydroxymethyl group from 5,10-methylenetetrahydrofolate is transferred onto alpha-ketoisovalerate to form ketopantoate.</text>
</comment>
<comment type="catalytic activity">
    <reaction>
        <text>3-methyl-2-oxobutanoate + (6R)-5,10-methylene-5,6,7,8-tetrahydrofolate + H2O = 2-dehydropantoate + (6S)-5,6,7,8-tetrahydrofolate</text>
        <dbReference type="Rhea" id="RHEA:11824"/>
        <dbReference type="ChEBI" id="CHEBI:11561"/>
        <dbReference type="ChEBI" id="CHEBI:11851"/>
        <dbReference type="ChEBI" id="CHEBI:15377"/>
        <dbReference type="ChEBI" id="CHEBI:15636"/>
        <dbReference type="ChEBI" id="CHEBI:57453"/>
        <dbReference type="EC" id="2.1.2.11"/>
    </reaction>
</comment>
<comment type="cofactor">
    <cofactor evidence="1">
        <name>Mg(2+)</name>
        <dbReference type="ChEBI" id="CHEBI:18420"/>
    </cofactor>
    <text evidence="1">Binds 1 Mg(2+) ion per subunit.</text>
</comment>
<comment type="pathway">
    <text>Cofactor biosynthesis; (R)-pantothenate biosynthesis; (R)-pantoate from 3-methyl-2-oxobutanoate: step 1/2.</text>
</comment>
<comment type="subcellular location">
    <subcellularLocation>
        <location evidence="1">Mitochondrion</location>
    </subcellularLocation>
</comment>
<comment type="similarity">
    <text evidence="3">Belongs to the PanB family.</text>
</comment>
<comment type="sequence caution" evidence="3">
    <conflict type="erroneous gene model prediction">
        <sequence resource="EMBL-CDS" id="BAF04374"/>
    </conflict>
</comment>
<proteinExistence type="evidence at transcript level"/>
<keyword id="KW-0460">Magnesium</keyword>
<keyword id="KW-0479">Metal-binding</keyword>
<keyword id="KW-0496">Mitochondrion</keyword>
<keyword id="KW-0566">Pantothenate biosynthesis</keyword>
<keyword id="KW-1185">Reference proteome</keyword>
<keyword id="KW-0808">Transferase</keyword>
<keyword id="KW-0809">Transit peptide</keyword>
<dbReference type="EC" id="2.1.2.11"/>
<dbReference type="EMBL" id="AP002900">
    <property type="protein sequence ID" value="BAB92103.1"/>
    <property type="molecule type" value="Genomic_DNA"/>
</dbReference>
<dbReference type="EMBL" id="AP002902">
    <property type="protein sequence ID" value="BAB32712.1"/>
    <property type="molecule type" value="Genomic_DNA"/>
</dbReference>
<dbReference type="EMBL" id="AP008207">
    <property type="protein sequence ID" value="BAF04374.2"/>
    <property type="status" value="ALT_SEQ"/>
    <property type="molecule type" value="Genomic_DNA"/>
</dbReference>
<dbReference type="EMBL" id="AP014957">
    <property type="status" value="NOT_ANNOTATED_CDS"/>
    <property type="molecule type" value="Genomic_DNA"/>
</dbReference>
<dbReference type="EMBL" id="AK242525">
    <property type="status" value="NOT_ANNOTATED_CDS"/>
    <property type="molecule type" value="mRNA"/>
</dbReference>
<dbReference type="RefSeq" id="XP_015629790.1">
    <property type="nucleotide sequence ID" value="XM_015774304.1"/>
</dbReference>
<dbReference type="SMR" id="Q9AWZ8"/>
<dbReference type="FunCoup" id="Q9AWZ8">
    <property type="interactions" value="450"/>
</dbReference>
<dbReference type="STRING" id="39947.Q9AWZ8"/>
<dbReference type="PaxDb" id="39947-Q9AWZ8"/>
<dbReference type="KEGG" id="dosa:Os01g0225400"/>
<dbReference type="eggNOG" id="KOG2949">
    <property type="taxonomic scope" value="Eukaryota"/>
</dbReference>
<dbReference type="InParanoid" id="Q9AWZ8"/>
<dbReference type="OrthoDB" id="425211at2759"/>
<dbReference type="PlantReactome" id="R-OSA-1119496">
    <property type="pathway name" value="Pantothenate biosynthesis I"/>
</dbReference>
<dbReference type="PlantReactome" id="R-OSA-1119544">
    <property type="pathway name" value="Pantothenate biosynthesis II"/>
</dbReference>
<dbReference type="UniPathway" id="UPA00028">
    <property type="reaction ID" value="UER00003"/>
</dbReference>
<dbReference type="Proteomes" id="UP000000763">
    <property type="component" value="Chromosome 1"/>
</dbReference>
<dbReference type="Proteomes" id="UP000059680">
    <property type="component" value="Chromosome 1"/>
</dbReference>
<dbReference type="GO" id="GO:0005739">
    <property type="term" value="C:mitochondrion"/>
    <property type="evidence" value="ECO:0000318"/>
    <property type="project" value="GO_Central"/>
</dbReference>
<dbReference type="GO" id="GO:0003864">
    <property type="term" value="F:3-methyl-2-oxobutanoate hydroxymethyltransferase activity"/>
    <property type="evidence" value="ECO:0000318"/>
    <property type="project" value="GO_Central"/>
</dbReference>
<dbReference type="GO" id="GO:0000287">
    <property type="term" value="F:magnesium ion binding"/>
    <property type="evidence" value="ECO:0000318"/>
    <property type="project" value="GO_Central"/>
</dbReference>
<dbReference type="GO" id="GO:0015940">
    <property type="term" value="P:pantothenate biosynthetic process"/>
    <property type="evidence" value="ECO:0000318"/>
    <property type="project" value="GO_Central"/>
</dbReference>
<dbReference type="CDD" id="cd06557">
    <property type="entry name" value="KPHMT-like"/>
    <property type="match status" value="1"/>
</dbReference>
<dbReference type="FunFam" id="3.20.20.60:FF:000003">
    <property type="entry name" value="3-methyl-2-oxobutanoate hydroxymethyltransferase"/>
    <property type="match status" value="1"/>
</dbReference>
<dbReference type="Gene3D" id="3.20.20.60">
    <property type="entry name" value="Phosphoenolpyruvate-binding domains"/>
    <property type="match status" value="1"/>
</dbReference>
<dbReference type="HAMAP" id="MF_00156">
    <property type="entry name" value="PanB"/>
    <property type="match status" value="1"/>
</dbReference>
<dbReference type="InterPro" id="IPR003700">
    <property type="entry name" value="Pantoate_hydroxy_MeTrfase"/>
</dbReference>
<dbReference type="InterPro" id="IPR015813">
    <property type="entry name" value="Pyrv/PenolPyrv_kinase-like_dom"/>
</dbReference>
<dbReference type="InterPro" id="IPR040442">
    <property type="entry name" value="Pyrv_kinase-like_dom_sf"/>
</dbReference>
<dbReference type="NCBIfam" id="TIGR00222">
    <property type="entry name" value="panB"/>
    <property type="match status" value="1"/>
</dbReference>
<dbReference type="NCBIfam" id="NF001452">
    <property type="entry name" value="PRK00311.1"/>
    <property type="match status" value="1"/>
</dbReference>
<dbReference type="PANTHER" id="PTHR20881">
    <property type="entry name" value="3-METHYL-2-OXOBUTANOATE HYDROXYMETHYLTRANSFERASE"/>
    <property type="match status" value="1"/>
</dbReference>
<dbReference type="PANTHER" id="PTHR20881:SF0">
    <property type="entry name" value="3-METHYL-2-OXOBUTANOATE HYDROXYMETHYLTRANSFERASE"/>
    <property type="match status" value="1"/>
</dbReference>
<dbReference type="Pfam" id="PF02548">
    <property type="entry name" value="Pantoate_transf"/>
    <property type="match status" value="1"/>
</dbReference>
<dbReference type="SUPFAM" id="SSF51621">
    <property type="entry name" value="Phosphoenolpyruvate/pyruvate domain"/>
    <property type="match status" value="1"/>
</dbReference>
<sequence>MMMMMRRAFRHLARQQRRPLSHVPESAVYGGPRPQDVGAAAGAGAGAGATRRVTVTTLRGKHRRGEPITVVTAYDYPSAVHVDSAGIDVCLVGDSAAMVVHGHDTTLPISLDVMLEHCRAVARGATRPLLVGDLPFGCYESSSTRAVDSAVRVLKEGGMDAIKLEGGAPSRISAAKAIVEAGIAVMGHVGLTPQAISVLGGFRPQGKTVDSAVKVVETALALQEAGCFSVVLECVPAPVAAAATSALQIPTIGIGAGPFCSGQVLVYHDLLGMMQHPHHAKVTPKFCKQFGNVGHVINKALSEYKQEVETRSFPGPSHTPYKIAAADVDGFANALQKMGLDEAANAAAAAAENAEKDGELPENK</sequence>
<reference key="1">
    <citation type="journal article" date="2002" name="Nature">
        <title>The genome sequence and structure of rice chromosome 1.</title>
        <authorList>
            <person name="Sasaki T."/>
            <person name="Matsumoto T."/>
            <person name="Yamamoto K."/>
            <person name="Sakata K."/>
            <person name="Baba T."/>
            <person name="Katayose Y."/>
            <person name="Wu J."/>
            <person name="Niimura Y."/>
            <person name="Cheng Z."/>
            <person name="Nagamura Y."/>
            <person name="Antonio B.A."/>
            <person name="Kanamori H."/>
            <person name="Hosokawa S."/>
            <person name="Masukawa M."/>
            <person name="Arikawa K."/>
            <person name="Chiden Y."/>
            <person name="Hayashi M."/>
            <person name="Okamoto M."/>
            <person name="Ando T."/>
            <person name="Aoki H."/>
            <person name="Arita K."/>
            <person name="Hamada M."/>
            <person name="Harada C."/>
            <person name="Hijishita S."/>
            <person name="Honda M."/>
            <person name="Ichikawa Y."/>
            <person name="Idonuma A."/>
            <person name="Iijima M."/>
            <person name="Ikeda M."/>
            <person name="Ikeno M."/>
            <person name="Ito S."/>
            <person name="Ito T."/>
            <person name="Ito Y."/>
            <person name="Ito Y."/>
            <person name="Iwabuchi A."/>
            <person name="Kamiya K."/>
            <person name="Karasawa W."/>
            <person name="Katagiri S."/>
            <person name="Kikuta A."/>
            <person name="Kobayashi N."/>
            <person name="Kono I."/>
            <person name="Machita K."/>
            <person name="Maehara T."/>
            <person name="Mizuno H."/>
            <person name="Mizubayashi T."/>
            <person name="Mukai Y."/>
            <person name="Nagasaki H."/>
            <person name="Nakashima M."/>
            <person name="Nakama Y."/>
            <person name="Nakamichi Y."/>
            <person name="Nakamura M."/>
            <person name="Namiki N."/>
            <person name="Negishi M."/>
            <person name="Ohta I."/>
            <person name="Ono N."/>
            <person name="Saji S."/>
            <person name="Sakai K."/>
            <person name="Shibata M."/>
            <person name="Shimokawa T."/>
            <person name="Shomura A."/>
            <person name="Song J."/>
            <person name="Takazaki Y."/>
            <person name="Terasawa K."/>
            <person name="Tsuji K."/>
            <person name="Waki K."/>
            <person name="Yamagata H."/>
            <person name="Yamane H."/>
            <person name="Yoshiki S."/>
            <person name="Yoshihara R."/>
            <person name="Yukawa K."/>
            <person name="Zhong H."/>
            <person name="Iwama H."/>
            <person name="Endo T."/>
            <person name="Ito H."/>
            <person name="Hahn J.H."/>
            <person name="Kim H.-I."/>
            <person name="Eun M.-Y."/>
            <person name="Yano M."/>
            <person name="Jiang J."/>
            <person name="Gojobori T."/>
        </authorList>
    </citation>
    <scope>NUCLEOTIDE SEQUENCE [LARGE SCALE GENOMIC DNA]</scope>
    <source>
        <strain>cv. Nipponbare</strain>
    </source>
</reference>
<reference key="2">
    <citation type="journal article" date="2005" name="Nature">
        <title>The map-based sequence of the rice genome.</title>
        <authorList>
            <consortium name="International rice genome sequencing project (IRGSP)"/>
        </authorList>
    </citation>
    <scope>NUCLEOTIDE SEQUENCE [LARGE SCALE GENOMIC DNA]</scope>
    <source>
        <strain>cv. Nipponbare</strain>
    </source>
</reference>
<reference key="3">
    <citation type="journal article" date="2008" name="Nucleic Acids Res.">
        <title>The rice annotation project database (RAP-DB): 2008 update.</title>
        <authorList>
            <consortium name="The rice annotation project (RAP)"/>
        </authorList>
    </citation>
    <scope>GENOME REANNOTATION</scope>
    <source>
        <strain>cv. Nipponbare</strain>
    </source>
</reference>
<reference key="4">
    <citation type="journal article" date="2013" name="Rice">
        <title>Improvement of the Oryza sativa Nipponbare reference genome using next generation sequence and optical map data.</title>
        <authorList>
            <person name="Kawahara Y."/>
            <person name="de la Bastide M."/>
            <person name="Hamilton J.P."/>
            <person name="Kanamori H."/>
            <person name="McCombie W.R."/>
            <person name="Ouyang S."/>
            <person name="Schwartz D.C."/>
            <person name="Tanaka T."/>
            <person name="Wu J."/>
            <person name="Zhou S."/>
            <person name="Childs K.L."/>
            <person name="Davidson R.M."/>
            <person name="Lin H."/>
            <person name="Quesada-Ocampo L."/>
            <person name="Vaillancourt B."/>
            <person name="Sakai H."/>
            <person name="Lee S.S."/>
            <person name="Kim J."/>
            <person name="Numa H."/>
            <person name="Itoh T."/>
            <person name="Buell C.R."/>
            <person name="Matsumoto T."/>
        </authorList>
    </citation>
    <scope>GENOME REANNOTATION</scope>
    <source>
        <strain>cv. Nipponbare</strain>
    </source>
</reference>
<reference key="5">
    <citation type="submission" date="2006-10" db="EMBL/GenBank/DDBJ databases">
        <title>Oryza sativa full length cDNA.</title>
        <authorList>
            <consortium name="The rice full-length cDNA consortium"/>
        </authorList>
    </citation>
    <scope>NUCLEOTIDE SEQUENCE [LARGE SCALE MRNA]</scope>
    <source>
        <strain>cv. Nipponbare</strain>
    </source>
</reference>
<evidence type="ECO:0000250" key="1"/>
<evidence type="ECO:0000255" key="2"/>
<evidence type="ECO:0000305" key="3"/>
<organism>
    <name type="scientific">Oryza sativa subsp. japonica</name>
    <name type="common">Rice</name>
    <dbReference type="NCBI Taxonomy" id="39947"/>
    <lineage>
        <taxon>Eukaryota</taxon>
        <taxon>Viridiplantae</taxon>
        <taxon>Streptophyta</taxon>
        <taxon>Embryophyta</taxon>
        <taxon>Tracheophyta</taxon>
        <taxon>Spermatophyta</taxon>
        <taxon>Magnoliopsida</taxon>
        <taxon>Liliopsida</taxon>
        <taxon>Poales</taxon>
        <taxon>Poaceae</taxon>
        <taxon>BOP clade</taxon>
        <taxon>Oryzoideae</taxon>
        <taxon>Oryzeae</taxon>
        <taxon>Oryzinae</taxon>
        <taxon>Oryza</taxon>
        <taxon>Oryza sativa</taxon>
    </lineage>
</organism>
<gene>
    <name type="primary">KPHMT1</name>
    <name type="synonym">PANB1</name>
    <name type="ordered locus">Os01g0225400</name>
    <name type="ordered locus">LOC_Os01g12560</name>
    <name type="ORF">P0443E07.6</name>
    <name type="ORF">P0492F05.15</name>
</gene>
<accession>Q9AWZ8</accession>
<accession>Q0JPF4</accession>
<feature type="transit peptide" description="Mitochondrion" evidence="2">
    <location>
        <begin position="1"/>
        <end position="59"/>
    </location>
</feature>
<feature type="chain" id="PRO_0000429568" description="3-methyl-2-oxobutanoate hydroxymethyltransferase 1, mitochondrial">
    <location>
        <begin position="60"/>
        <end position="364"/>
    </location>
</feature>
<feature type="active site" description="Proton acceptor" evidence="1">
    <location>
        <position position="233"/>
    </location>
</feature>
<feature type="binding site" evidence="1">
    <location>
        <begin position="94"/>
        <end position="95"/>
    </location>
    <ligand>
        <name>3-methyl-2-oxobutanoate</name>
        <dbReference type="ChEBI" id="CHEBI:11851"/>
    </ligand>
</feature>
<feature type="binding site" evidence="1">
    <location>
        <position position="94"/>
    </location>
    <ligand>
        <name>Mg(2+)</name>
        <dbReference type="ChEBI" id="CHEBI:18420"/>
    </ligand>
</feature>
<feature type="binding site" evidence="1">
    <location>
        <position position="133"/>
    </location>
    <ligand>
        <name>3-methyl-2-oxobutanoate</name>
        <dbReference type="ChEBI" id="CHEBI:11851"/>
    </ligand>
</feature>
<feature type="binding site" evidence="1">
    <location>
        <position position="133"/>
    </location>
    <ligand>
        <name>Mg(2+)</name>
        <dbReference type="ChEBI" id="CHEBI:18420"/>
    </ligand>
</feature>
<feature type="binding site" evidence="1">
    <location>
        <position position="163"/>
    </location>
    <ligand>
        <name>3-methyl-2-oxobutanoate</name>
        <dbReference type="ChEBI" id="CHEBI:11851"/>
    </ligand>
</feature>
<feature type="binding site" evidence="1">
    <location>
        <position position="165"/>
    </location>
    <ligand>
        <name>Mg(2+)</name>
        <dbReference type="ChEBI" id="CHEBI:18420"/>
    </ligand>
</feature>
<feature type="sequence conflict" description="In Ref. 5; AK242525." evidence="3" ref="5">
    <original>Y</original>
    <variation>F</variation>
    <location>
        <position position="321"/>
    </location>
</feature>